<feature type="chain" id="PRO_0000050519" description="Mitochondrial outer membrane protein porin">
    <location>
        <begin position="1"/>
        <end position="275"/>
    </location>
</feature>
<feature type="modified residue" description="Blocked amino end (Met)">
    <location>
        <position position="1"/>
    </location>
</feature>
<dbReference type="EMBL" id="M96668">
    <property type="protein sequence ID" value="AAA33237.1"/>
    <property type="molecule type" value="mRNA"/>
</dbReference>
<dbReference type="EMBL" id="AAFI02000007">
    <property type="protein sequence ID" value="EAL71503.1"/>
    <property type="molecule type" value="Genomic_DNA"/>
</dbReference>
<dbReference type="PIR" id="A45076">
    <property type="entry name" value="S27805"/>
</dbReference>
<dbReference type="RefSeq" id="XP_645436.1">
    <property type="nucleotide sequence ID" value="XM_640344.1"/>
</dbReference>
<dbReference type="SMR" id="Q01501"/>
<dbReference type="FunCoup" id="Q01501">
    <property type="interactions" value="1"/>
</dbReference>
<dbReference type="STRING" id="44689.Q01501"/>
<dbReference type="TCDB" id="1.B.8.1.13">
    <property type="family name" value="the mitochondrial and plastid porin (mpp) family"/>
</dbReference>
<dbReference type="PaxDb" id="44689-DDB0185213"/>
<dbReference type="ABCD" id="Q01501">
    <property type="antibodies" value="1 sequenced antibody"/>
</dbReference>
<dbReference type="EnsemblProtists" id="EAL71503">
    <property type="protein sequence ID" value="EAL71503"/>
    <property type="gene ID" value="DDB_G0271848"/>
</dbReference>
<dbReference type="GeneID" id="8618176"/>
<dbReference type="KEGG" id="ddi:DDB_G0271848"/>
<dbReference type="dictyBase" id="DDB_G0271848">
    <property type="gene designation" value="porA"/>
</dbReference>
<dbReference type="VEuPathDB" id="AmoebaDB:DDB_G0271848"/>
<dbReference type="HOGENOM" id="CLU_1013465_0_0_1"/>
<dbReference type="InParanoid" id="Q01501"/>
<dbReference type="OMA" id="QYNINDA"/>
<dbReference type="PhylomeDB" id="Q01501"/>
<dbReference type="Reactome" id="R-DDI-5205685">
    <property type="pathway name" value="PINK1-PRKN Mediated Mitophagy"/>
</dbReference>
<dbReference type="Reactome" id="R-DDI-70268">
    <property type="pathway name" value="Pyruvate metabolism"/>
</dbReference>
<dbReference type="PRO" id="PR:Q01501"/>
<dbReference type="Proteomes" id="UP000002195">
    <property type="component" value="Chromosome 2"/>
</dbReference>
<dbReference type="GO" id="GO:0005911">
    <property type="term" value="C:cell-cell junction"/>
    <property type="evidence" value="ECO:0000314"/>
    <property type="project" value="dictyBase"/>
</dbReference>
<dbReference type="GO" id="GO:0031012">
    <property type="term" value="C:extracellular matrix"/>
    <property type="evidence" value="ECO:0007005"/>
    <property type="project" value="dictyBase"/>
</dbReference>
<dbReference type="GO" id="GO:0005741">
    <property type="term" value="C:mitochondrial outer membrane"/>
    <property type="evidence" value="ECO:0000314"/>
    <property type="project" value="dictyBase"/>
</dbReference>
<dbReference type="GO" id="GO:0140220">
    <property type="term" value="C:pathogen-containing vacuole"/>
    <property type="evidence" value="ECO:0007005"/>
    <property type="project" value="dictyBase"/>
</dbReference>
<dbReference type="GO" id="GO:0045335">
    <property type="term" value="C:phagocytic vesicle"/>
    <property type="evidence" value="ECO:0007005"/>
    <property type="project" value="dictyBase"/>
</dbReference>
<dbReference type="GO" id="GO:0046930">
    <property type="term" value="C:pore complex"/>
    <property type="evidence" value="ECO:0007669"/>
    <property type="project" value="UniProtKB-KW"/>
</dbReference>
<dbReference type="GO" id="GO:0015288">
    <property type="term" value="F:porin activity"/>
    <property type="evidence" value="ECO:0000314"/>
    <property type="project" value="dictyBase"/>
</dbReference>
<dbReference type="GO" id="GO:0008308">
    <property type="term" value="F:voltage-gated monoatomic anion channel activity"/>
    <property type="evidence" value="ECO:0000318"/>
    <property type="project" value="GO_Central"/>
</dbReference>
<dbReference type="GO" id="GO:0005244">
    <property type="term" value="F:voltage-gated monoatomic ion channel activity"/>
    <property type="evidence" value="ECO:0000314"/>
    <property type="project" value="dictyBase"/>
</dbReference>
<dbReference type="GO" id="GO:0034765">
    <property type="term" value="P:regulation of monoatomic ion transmembrane transport"/>
    <property type="evidence" value="ECO:0000314"/>
    <property type="project" value="dictyBase"/>
</dbReference>
<dbReference type="Gene3D" id="2.40.160.10">
    <property type="entry name" value="Porin"/>
    <property type="match status" value="1"/>
</dbReference>
<dbReference type="InterPro" id="IPR023614">
    <property type="entry name" value="Porin_dom_sf"/>
</dbReference>
<dbReference type="InterPro" id="IPR001925">
    <property type="entry name" value="Porin_Euk"/>
</dbReference>
<dbReference type="InterPro" id="IPR027246">
    <property type="entry name" value="Porin_Euk/Tom40"/>
</dbReference>
<dbReference type="PANTHER" id="PTHR11743:SF70">
    <property type="entry name" value="GH26960P-RELATED"/>
    <property type="match status" value="1"/>
</dbReference>
<dbReference type="PANTHER" id="PTHR11743">
    <property type="entry name" value="VOLTAGE-DEPENDENT ANION-SELECTIVE CHANNEL"/>
    <property type="match status" value="1"/>
</dbReference>
<dbReference type="Pfam" id="PF01459">
    <property type="entry name" value="Porin_3"/>
    <property type="match status" value="1"/>
</dbReference>
<dbReference type="PROSITE" id="PS00558">
    <property type="entry name" value="EUKARYOTIC_PORIN"/>
    <property type="match status" value="1"/>
</dbReference>
<accession>Q01501</accession>
<accession>Q55AH3</accession>
<accession>Q8T810</accession>
<sequence length="275" mass="30158">MNPGLYADLTKPTADFIKKDFAETFKLDTTFKGKYGSIVAVTDIKDSGVVASIQPKADFTKYLGKVSNGNFTVDTNGVKKGEFTIENIIPGLKAVANGDSKQNFSTEFQYKKDKIAFTLFGHNNKSFNTSLAFLINPTFSVGVQAEGNAKNTLKNVNATITIRPRPDVFVSIVDRFMDKQILLSTLYTATSKLSFAGDVTVDLKASEKAPSFNVGTQYKIDSASLLKAKVNNNRKVNISYIYNTSNNTKFVLGWNVNTKNFKQGNTFGATVNLTL</sequence>
<comment type="function">
    <text>Forms a channel of about 1,7 nM through the cell membrane that allows diffusion of small hydrophilic molecules. The channel adopts an open conformation at low or zero membrane potential and a closed conformation at potentials above 20 mv. The open state has a weak anion selectivity whereas the closed state is cation-selective.</text>
</comment>
<comment type="subcellular location">
    <subcellularLocation>
        <location>Mitochondrion outer membrane</location>
    </subcellularLocation>
</comment>
<comment type="domain">
    <text>Consists mainly of membrane-spanning sided beta-sheets.</text>
</comment>
<comment type="similarity">
    <text evidence="1">Belongs to the eukaryotic mitochondrial porin family. Highly divergent.</text>
</comment>
<name>VDAC_DICDI</name>
<reference key="1">
    <citation type="journal article" date="1992" name="J. Biol. Chem.">
        <title>Purification, functional characterization, and cDNA sequencing of mitochondrial porin from Dictyostelium discoideum.</title>
        <authorList>
            <person name="Troll H."/>
            <person name="Malchow D."/>
            <person name="Mueller-Taubenberger A."/>
            <person name="Humbel B."/>
            <person name="Lottspeich F."/>
            <person name="Ecke M."/>
            <person name="Gerisch G."/>
            <person name="Schmid A."/>
            <person name="Benz R."/>
        </authorList>
    </citation>
    <scope>NUCLEOTIDE SEQUENCE [MRNA]</scope>
    <scope>PROTEIN SEQUENCE OF 2-12 AND 178-188</scope>
    <source>
        <strain>AX2</strain>
    </source>
</reference>
<reference key="2">
    <citation type="journal article" date="2002" name="Nature">
        <title>Sequence and analysis of chromosome 2 of Dictyostelium discoideum.</title>
        <authorList>
            <person name="Gloeckner G."/>
            <person name="Eichinger L."/>
            <person name="Szafranski K."/>
            <person name="Pachebat J.A."/>
            <person name="Bankier A.T."/>
            <person name="Dear P.H."/>
            <person name="Lehmann R."/>
            <person name="Baumgart C."/>
            <person name="Parra G."/>
            <person name="Abril J.F."/>
            <person name="Guigo R."/>
            <person name="Kumpf K."/>
            <person name="Tunggal B."/>
            <person name="Cox E.C."/>
            <person name="Quail M.A."/>
            <person name="Platzer M."/>
            <person name="Rosenthal A."/>
            <person name="Noegel A.A."/>
        </authorList>
    </citation>
    <scope>NUCLEOTIDE SEQUENCE [LARGE SCALE GENOMIC DNA]</scope>
    <source>
        <strain>AX4</strain>
    </source>
</reference>
<reference key="3">
    <citation type="journal article" date="2005" name="Nature">
        <title>The genome of the social amoeba Dictyostelium discoideum.</title>
        <authorList>
            <person name="Eichinger L."/>
            <person name="Pachebat J.A."/>
            <person name="Gloeckner G."/>
            <person name="Rajandream M.A."/>
            <person name="Sucgang R."/>
            <person name="Berriman M."/>
            <person name="Song J."/>
            <person name="Olsen R."/>
            <person name="Szafranski K."/>
            <person name="Xu Q."/>
            <person name="Tunggal B."/>
            <person name="Kummerfeld S."/>
            <person name="Madera M."/>
            <person name="Konfortov B.A."/>
            <person name="Rivero F."/>
            <person name="Bankier A.T."/>
            <person name="Lehmann R."/>
            <person name="Hamlin N."/>
            <person name="Davies R."/>
            <person name="Gaudet P."/>
            <person name="Fey P."/>
            <person name="Pilcher K."/>
            <person name="Chen G."/>
            <person name="Saunders D."/>
            <person name="Sodergren E.J."/>
            <person name="Davis P."/>
            <person name="Kerhornou A."/>
            <person name="Nie X."/>
            <person name="Hall N."/>
            <person name="Anjard C."/>
            <person name="Hemphill L."/>
            <person name="Bason N."/>
            <person name="Farbrother P."/>
            <person name="Desany B."/>
            <person name="Just E."/>
            <person name="Morio T."/>
            <person name="Rost R."/>
            <person name="Churcher C.M."/>
            <person name="Cooper J."/>
            <person name="Haydock S."/>
            <person name="van Driessche N."/>
            <person name="Cronin A."/>
            <person name="Goodhead I."/>
            <person name="Muzny D.M."/>
            <person name="Mourier T."/>
            <person name="Pain A."/>
            <person name="Lu M."/>
            <person name="Harper D."/>
            <person name="Lindsay R."/>
            <person name="Hauser H."/>
            <person name="James K.D."/>
            <person name="Quiles M."/>
            <person name="Madan Babu M."/>
            <person name="Saito T."/>
            <person name="Buchrieser C."/>
            <person name="Wardroper A."/>
            <person name="Felder M."/>
            <person name="Thangavelu M."/>
            <person name="Johnson D."/>
            <person name="Knights A."/>
            <person name="Loulseged H."/>
            <person name="Mungall K.L."/>
            <person name="Oliver K."/>
            <person name="Price C."/>
            <person name="Quail M.A."/>
            <person name="Urushihara H."/>
            <person name="Hernandez J."/>
            <person name="Rabbinowitsch E."/>
            <person name="Steffen D."/>
            <person name="Sanders M."/>
            <person name="Ma J."/>
            <person name="Kohara Y."/>
            <person name="Sharp S."/>
            <person name="Simmonds M.N."/>
            <person name="Spiegler S."/>
            <person name="Tivey A."/>
            <person name="Sugano S."/>
            <person name="White B."/>
            <person name="Walker D."/>
            <person name="Woodward J.R."/>
            <person name="Winckler T."/>
            <person name="Tanaka Y."/>
            <person name="Shaulsky G."/>
            <person name="Schleicher M."/>
            <person name="Weinstock G.M."/>
            <person name="Rosenthal A."/>
            <person name="Cox E.C."/>
            <person name="Chisholm R.L."/>
            <person name="Gibbs R.A."/>
            <person name="Loomis W.F."/>
            <person name="Platzer M."/>
            <person name="Kay R.R."/>
            <person name="Williams J.G."/>
            <person name="Dear P.H."/>
            <person name="Noegel A.A."/>
            <person name="Barrell B.G."/>
            <person name="Kuspa A."/>
        </authorList>
    </citation>
    <scope>NUCLEOTIDE SEQUENCE [LARGE SCALE GENOMIC DNA]</scope>
    <source>
        <strain>AX4</strain>
    </source>
</reference>
<reference key="4">
    <citation type="journal article" date="2006" name="Mol. Cell. Proteomics">
        <title>Proteomics fingerprinting of phagosome maturation and evidence for the role of a Galpha during uptake.</title>
        <authorList>
            <person name="Gotthardt D."/>
            <person name="Blancheteau V."/>
            <person name="Bosserhoff A."/>
            <person name="Ruppert T."/>
            <person name="Delorenzi M."/>
            <person name="Soldati T."/>
        </authorList>
    </citation>
    <scope>IDENTIFICATION BY MASS SPECTROMETRY [LARGE SCALE ANALYSIS]</scope>
    <source>
        <strain>AX2</strain>
    </source>
</reference>
<keyword id="KW-0903">Direct protein sequencing</keyword>
<keyword id="KW-0406">Ion transport</keyword>
<keyword id="KW-0472">Membrane</keyword>
<keyword id="KW-0496">Mitochondrion</keyword>
<keyword id="KW-1000">Mitochondrion outer membrane</keyword>
<keyword id="KW-0626">Porin</keyword>
<keyword id="KW-1185">Reference proteome</keyword>
<keyword id="KW-0812">Transmembrane</keyword>
<keyword id="KW-1134">Transmembrane beta strand</keyword>
<keyword id="KW-0813">Transport</keyword>
<organism>
    <name type="scientific">Dictyostelium discoideum</name>
    <name type="common">Social amoeba</name>
    <dbReference type="NCBI Taxonomy" id="44689"/>
    <lineage>
        <taxon>Eukaryota</taxon>
        <taxon>Amoebozoa</taxon>
        <taxon>Evosea</taxon>
        <taxon>Eumycetozoa</taxon>
        <taxon>Dictyostelia</taxon>
        <taxon>Dictyosteliales</taxon>
        <taxon>Dictyosteliaceae</taxon>
        <taxon>Dictyostelium</taxon>
    </lineage>
</organism>
<evidence type="ECO:0000305" key="1"/>
<protein>
    <recommendedName>
        <fullName>Mitochondrial outer membrane protein porin</fullName>
    </recommendedName>
    <alternativeName>
        <fullName>Voltage-dependent anion-selective channel protein</fullName>
        <shortName>VDAC</shortName>
    </alternativeName>
</protein>
<gene>
    <name type="primary">porA</name>
    <name type="synonym">porN</name>
    <name type="ORF">DDB_G0271848</name>
</gene>
<proteinExistence type="evidence at protein level"/>